<proteinExistence type="evidence at protein level"/>
<feature type="chain" id="PRO_0000128712" description="Malate:quinone oxidoreductase">
    <location>
        <begin position="1"/>
        <end position="548"/>
    </location>
</feature>
<feature type="region of interest" description="Disordered" evidence="2">
    <location>
        <begin position="521"/>
        <end position="548"/>
    </location>
</feature>
<feature type="compositionally biased region" description="Low complexity" evidence="2">
    <location>
        <begin position="530"/>
        <end position="541"/>
    </location>
</feature>
<dbReference type="EC" id="1.1.5.4"/>
<dbReference type="EMBL" id="U00008">
    <property type="protein sequence ID" value="AAA16402.1"/>
    <property type="status" value="ALT_INIT"/>
    <property type="molecule type" value="Genomic_DNA"/>
</dbReference>
<dbReference type="EMBL" id="U00096">
    <property type="protein sequence ID" value="AAC75270.1"/>
    <property type="molecule type" value="Genomic_DNA"/>
</dbReference>
<dbReference type="EMBL" id="AP009048">
    <property type="protein sequence ID" value="BAA15993.1"/>
    <property type="molecule type" value="Genomic_DNA"/>
</dbReference>
<dbReference type="PIR" id="H64990">
    <property type="entry name" value="H64990"/>
</dbReference>
<dbReference type="RefSeq" id="NP_416714.1">
    <property type="nucleotide sequence ID" value="NC_000913.3"/>
</dbReference>
<dbReference type="RefSeq" id="WP_000758077.1">
    <property type="nucleotide sequence ID" value="NZ_SSZK01000030.1"/>
</dbReference>
<dbReference type="SMR" id="P33940"/>
<dbReference type="BioGRID" id="4262217">
    <property type="interactions" value="26"/>
</dbReference>
<dbReference type="FunCoup" id="P33940">
    <property type="interactions" value="267"/>
</dbReference>
<dbReference type="IntAct" id="P33940">
    <property type="interactions" value="18"/>
</dbReference>
<dbReference type="STRING" id="511145.b2210"/>
<dbReference type="PaxDb" id="511145-b2210"/>
<dbReference type="EnsemblBacteria" id="AAC75270">
    <property type="protein sequence ID" value="AAC75270"/>
    <property type="gene ID" value="b2210"/>
</dbReference>
<dbReference type="GeneID" id="946702"/>
<dbReference type="KEGG" id="ecj:JW2198"/>
<dbReference type="KEGG" id="eco:b2210"/>
<dbReference type="KEGG" id="ecoc:C3026_12350"/>
<dbReference type="PATRIC" id="fig|1411691.4.peg.25"/>
<dbReference type="EchoBASE" id="EB1996"/>
<dbReference type="eggNOG" id="COG0579">
    <property type="taxonomic scope" value="Bacteria"/>
</dbReference>
<dbReference type="HOGENOM" id="CLU_028151_0_0_6"/>
<dbReference type="InParanoid" id="P33940"/>
<dbReference type="OMA" id="PHLDTRW"/>
<dbReference type="OrthoDB" id="9763983at2"/>
<dbReference type="PhylomeDB" id="P33940"/>
<dbReference type="BioCyc" id="EcoCyc:EG12069-MONOMER"/>
<dbReference type="BioCyc" id="MetaCyc:EG12069-MONOMER"/>
<dbReference type="UniPathway" id="UPA00223">
    <property type="reaction ID" value="UER01008"/>
</dbReference>
<dbReference type="PRO" id="PR:P33940"/>
<dbReference type="Proteomes" id="UP000000625">
    <property type="component" value="Chromosome"/>
</dbReference>
<dbReference type="GO" id="GO:0005737">
    <property type="term" value="C:cytoplasm"/>
    <property type="evidence" value="ECO:0000318"/>
    <property type="project" value="GO_Central"/>
</dbReference>
<dbReference type="GO" id="GO:0009898">
    <property type="term" value="C:cytoplasmic side of plasma membrane"/>
    <property type="evidence" value="ECO:0000314"/>
    <property type="project" value="EcoCyc"/>
</dbReference>
<dbReference type="GO" id="GO:0005829">
    <property type="term" value="C:cytosol"/>
    <property type="evidence" value="ECO:0000314"/>
    <property type="project" value="EcoCyc"/>
</dbReference>
<dbReference type="GO" id="GO:0050660">
    <property type="term" value="F:flavin adenine dinucleotide binding"/>
    <property type="evidence" value="ECO:0000314"/>
    <property type="project" value="EcoCyc"/>
</dbReference>
<dbReference type="GO" id="GO:0008924">
    <property type="term" value="F:L-malate dehydrogenase (quinone) activity"/>
    <property type="evidence" value="ECO:0000314"/>
    <property type="project" value="EcoCyc"/>
</dbReference>
<dbReference type="GO" id="GO:0006099">
    <property type="term" value="P:tricarboxylic acid cycle"/>
    <property type="evidence" value="ECO:0007669"/>
    <property type="project" value="UniProtKB-UniRule"/>
</dbReference>
<dbReference type="Gene3D" id="3.30.9.10">
    <property type="entry name" value="D-Amino Acid Oxidase, subunit A, domain 2"/>
    <property type="match status" value="1"/>
</dbReference>
<dbReference type="Gene3D" id="3.50.50.60">
    <property type="entry name" value="FAD/NAD(P)-binding domain"/>
    <property type="match status" value="1"/>
</dbReference>
<dbReference type="HAMAP" id="MF_00212">
    <property type="entry name" value="MQO"/>
    <property type="match status" value="1"/>
</dbReference>
<dbReference type="InterPro" id="IPR036188">
    <property type="entry name" value="FAD/NAD-bd_sf"/>
</dbReference>
<dbReference type="InterPro" id="IPR006231">
    <property type="entry name" value="MQO"/>
</dbReference>
<dbReference type="NCBIfam" id="TIGR01320">
    <property type="entry name" value="mal_quin_oxido"/>
    <property type="match status" value="1"/>
</dbReference>
<dbReference type="NCBIfam" id="NF003603">
    <property type="entry name" value="PRK05257.1-1"/>
    <property type="match status" value="1"/>
</dbReference>
<dbReference type="NCBIfam" id="NF003605">
    <property type="entry name" value="PRK05257.1-4"/>
    <property type="match status" value="1"/>
</dbReference>
<dbReference type="NCBIfam" id="NF003606">
    <property type="entry name" value="PRK05257.2-1"/>
    <property type="match status" value="1"/>
</dbReference>
<dbReference type="NCBIfam" id="NF003608">
    <property type="entry name" value="PRK05257.2-4"/>
    <property type="match status" value="1"/>
</dbReference>
<dbReference type="NCBIfam" id="NF003611">
    <property type="entry name" value="PRK05257.3-2"/>
    <property type="match status" value="1"/>
</dbReference>
<dbReference type="NCBIfam" id="NF009875">
    <property type="entry name" value="PRK13339.1"/>
    <property type="match status" value="1"/>
</dbReference>
<dbReference type="PANTHER" id="PTHR43104">
    <property type="entry name" value="L-2-HYDROXYGLUTARATE DEHYDROGENASE, MITOCHONDRIAL"/>
    <property type="match status" value="1"/>
</dbReference>
<dbReference type="PANTHER" id="PTHR43104:SF2">
    <property type="entry name" value="L-2-HYDROXYGLUTARATE DEHYDROGENASE, MITOCHONDRIAL"/>
    <property type="match status" value="1"/>
</dbReference>
<dbReference type="Pfam" id="PF06039">
    <property type="entry name" value="Mqo"/>
    <property type="match status" value="1"/>
</dbReference>
<dbReference type="SUPFAM" id="SSF51905">
    <property type="entry name" value="FAD/NAD(P)-binding domain"/>
    <property type="match status" value="1"/>
</dbReference>
<comment type="catalytic activity">
    <reaction>
        <text>(S)-malate + a quinone = a quinol + oxaloacetate</text>
        <dbReference type="Rhea" id="RHEA:46012"/>
        <dbReference type="ChEBI" id="CHEBI:15589"/>
        <dbReference type="ChEBI" id="CHEBI:16452"/>
        <dbReference type="ChEBI" id="CHEBI:24646"/>
        <dbReference type="ChEBI" id="CHEBI:132124"/>
        <dbReference type="EC" id="1.1.5.4"/>
    </reaction>
</comment>
<comment type="cofactor">
    <cofactor evidence="1">
        <name>FAD</name>
        <dbReference type="ChEBI" id="CHEBI:57692"/>
    </cofactor>
</comment>
<comment type="pathway">
    <text>Carbohydrate metabolism; tricarboxylic acid cycle; oxaloacetate from (S)-malate (quinone route): step 1/1.</text>
</comment>
<comment type="similarity">
    <text evidence="3">Belongs to the MQO family.</text>
</comment>
<comment type="sequence caution" evidence="3">
    <conflict type="erroneous initiation">
        <sequence resource="EMBL-CDS" id="AAA16402"/>
    </conflict>
</comment>
<organism>
    <name type="scientific">Escherichia coli (strain K12)</name>
    <dbReference type="NCBI Taxonomy" id="83333"/>
    <lineage>
        <taxon>Bacteria</taxon>
        <taxon>Pseudomonadati</taxon>
        <taxon>Pseudomonadota</taxon>
        <taxon>Gammaproteobacteria</taxon>
        <taxon>Enterobacterales</taxon>
        <taxon>Enterobacteriaceae</taxon>
        <taxon>Escherichia</taxon>
    </lineage>
</organism>
<protein>
    <recommendedName>
        <fullName>Malate:quinone oxidoreductase</fullName>
        <ecNumber>1.1.5.4</ecNumber>
    </recommendedName>
    <alternativeName>
        <fullName>MQO</fullName>
    </alternativeName>
    <alternativeName>
        <fullName>Malate dehydrogenase [quinone]</fullName>
    </alternativeName>
</protein>
<evidence type="ECO:0000250" key="1"/>
<evidence type="ECO:0000256" key="2">
    <source>
        <dbReference type="SAM" id="MobiDB-lite"/>
    </source>
</evidence>
<evidence type="ECO:0000305" key="3"/>
<accession>P33940</accession>
<accession>O08017</accession>
<accession>P76454</accession>
<gene>
    <name type="primary">mqo</name>
    <name type="synonym">yojH</name>
    <name type="ordered locus">b2210</name>
    <name type="ordered locus">JW2198</name>
</gene>
<reference key="1">
    <citation type="submission" date="1993-10" db="EMBL/GenBank/DDBJ databases">
        <title>Automated multiplex sequencing of the E.coli genome.</title>
        <authorList>
            <person name="Richterich P."/>
            <person name="Lakey N."/>
            <person name="Gryan G."/>
            <person name="Jaehn L."/>
            <person name="Mintz L."/>
            <person name="Robison K."/>
            <person name="Church G.M."/>
        </authorList>
    </citation>
    <scope>NUCLEOTIDE SEQUENCE [LARGE SCALE GENOMIC DNA]</scope>
    <source>
        <strain>K12 / BHB2600</strain>
    </source>
</reference>
<reference key="2">
    <citation type="journal article" date="1996" name="DNA Res.">
        <title>A 460-kb DNA sequence of the Escherichia coli K-12 genome corresponding to the 40.1-50.0 min region on the linkage map.</title>
        <authorList>
            <person name="Itoh T."/>
            <person name="Aiba H."/>
            <person name="Baba T."/>
            <person name="Fujita K."/>
            <person name="Hayashi K."/>
            <person name="Inada T."/>
            <person name="Isono K."/>
            <person name="Kasai H."/>
            <person name="Kimura S."/>
            <person name="Kitakawa M."/>
            <person name="Kitagawa M."/>
            <person name="Makino K."/>
            <person name="Miki T."/>
            <person name="Mizobuchi K."/>
            <person name="Mori H."/>
            <person name="Mori T."/>
            <person name="Motomura K."/>
            <person name="Nakade S."/>
            <person name="Nakamura Y."/>
            <person name="Nashimoto H."/>
            <person name="Nishio Y."/>
            <person name="Oshima T."/>
            <person name="Saito N."/>
            <person name="Sampei G."/>
            <person name="Seki Y."/>
            <person name="Sivasundaram S."/>
            <person name="Tagami H."/>
            <person name="Takeda J."/>
            <person name="Takemoto K."/>
            <person name="Wada C."/>
            <person name="Yamamoto Y."/>
            <person name="Horiuchi T."/>
        </authorList>
    </citation>
    <scope>NUCLEOTIDE SEQUENCE [LARGE SCALE GENOMIC DNA]</scope>
    <source>
        <strain>K12 / W3110 / ATCC 27325 / DSM 5911</strain>
    </source>
</reference>
<reference key="3">
    <citation type="journal article" date="1997" name="Science">
        <title>The complete genome sequence of Escherichia coli K-12.</title>
        <authorList>
            <person name="Blattner F.R."/>
            <person name="Plunkett G. III"/>
            <person name="Bloch C.A."/>
            <person name="Perna N.T."/>
            <person name="Burland V."/>
            <person name="Riley M."/>
            <person name="Collado-Vides J."/>
            <person name="Glasner J.D."/>
            <person name="Rode C.K."/>
            <person name="Mayhew G.F."/>
            <person name="Gregor J."/>
            <person name="Davis N.W."/>
            <person name="Kirkpatrick H.A."/>
            <person name="Goeden M.A."/>
            <person name="Rose D.J."/>
            <person name="Mau B."/>
            <person name="Shao Y."/>
        </authorList>
    </citation>
    <scope>NUCLEOTIDE SEQUENCE [LARGE SCALE GENOMIC DNA]</scope>
    <source>
        <strain>K12 / MG1655 / ATCC 47076</strain>
    </source>
</reference>
<reference key="4">
    <citation type="journal article" date="2006" name="Mol. Syst. Biol.">
        <title>Highly accurate genome sequences of Escherichia coli K-12 strains MG1655 and W3110.</title>
        <authorList>
            <person name="Hayashi K."/>
            <person name="Morooka N."/>
            <person name="Yamamoto Y."/>
            <person name="Fujita K."/>
            <person name="Isono K."/>
            <person name="Choi S."/>
            <person name="Ohtsubo E."/>
            <person name="Baba T."/>
            <person name="Wanner B.L."/>
            <person name="Mori H."/>
            <person name="Horiuchi T."/>
        </authorList>
    </citation>
    <scope>NUCLEOTIDE SEQUENCE [LARGE SCALE GENOMIC DNA]</scope>
    <source>
        <strain>K12 / W3110 / ATCC 27325 / DSM 5911</strain>
    </source>
</reference>
<reference key="5">
    <citation type="journal article" date="2000" name="J. Bacteriol.">
        <title>Another unusual type of citric acid cycle enzyme in Helicobacter pylori: the malate:quinone oxidoreductase.</title>
        <authorList>
            <person name="Kather B."/>
            <person name="Stingl K."/>
            <person name="van der Rest M.E."/>
            <person name="Altendorf K."/>
            <person name="Molenaar D."/>
        </authorList>
    </citation>
    <scope>CHARACTERIZATION</scope>
</reference>
<sequence length="548" mass="60230">MKKVTAMLFSMAVGLNAVSMAAKAKASEEQETDVLLIGGGIMSATLGTYLRELEPEWSMTMVERLEGVAQESSNGWNNAGTGHSALMELNYTPQNADGSISIEKAVAINEAFQISRQFWAHQVERGVLRTPRSFINTVPHMSFVWGEDNVNFLRARYAALQQSSLFRGMRYSEDHAQIKEWAPLVMEGRDPQQKVAATRTEIGTDVNYGEITRQLIASLQKKSNFSLQLSSEVRALKRNDDNTWTVTVADLKNGTAQNIRAKFVFIGAGGAALKLLQESGIPEAKDYAGFPVGGQFLVSENPDVVNHHLAKVYGKASVGAPPMSVPHIDTRVLDGKRVVLFGPFATFSTKFLKNGSLWDLMSSTTTSNVMPMMHVGLDNFDLVKYLVSQVMLSEEDRFEALKEYYPQAKKEDWRLWQAGQRVQIIKRDAEKGGVLRLGTEVVSDQQGTIAALLGASPGASTAAPIMLNLLEKVFGDRVSSPQWQATLKAIVPSYGRKLNGDVAATERELQYTSEVLGLNYDKPQAADSTPKPQLKPQPVQKEVADIAL</sequence>
<name>MQO_ECOLI</name>
<keyword id="KW-0274">FAD</keyword>
<keyword id="KW-0285">Flavoprotein</keyword>
<keyword id="KW-0560">Oxidoreductase</keyword>
<keyword id="KW-1185">Reference proteome</keyword>
<keyword id="KW-0816">Tricarboxylic acid cycle</keyword>